<dbReference type="EMBL" id="AP009178">
    <property type="protein sequence ID" value="BAF70666.1"/>
    <property type="molecule type" value="Genomic_DNA"/>
</dbReference>
<dbReference type="RefSeq" id="WP_012082929.1">
    <property type="nucleotide sequence ID" value="NC_009662.1"/>
</dbReference>
<dbReference type="SMR" id="A6Q5A7"/>
<dbReference type="FunCoup" id="A6Q5A7">
    <property type="interactions" value="384"/>
</dbReference>
<dbReference type="STRING" id="387092.NIS_1559"/>
<dbReference type="KEGG" id="nis:NIS_1559"/>
<dbReference type="eggNOG" id="COG0254">
    <property type="taxonomic scope" value="Bacteria"/>
</dbReference>
<dbReference type="HOGENOM" id="CLU_114306_4_3_7"/>
<dbReference type="InParanoid" id="A6Q5A7"/>
<dbReference type="OrthoDB" id="9803251at2"/>
<dbReference type="Proteomes" id="UP000001118">
    <property type="component" value="Chromosome"/>
</dbReference>
<dbReference type="GO" id="GO:1990904">
    <property type="term" value="C:ribonucleoprotein complex"/>
    <property type="evidence" value="ECO:0007669"/>
    <property type="project" value="UniProtKB-KW"/>
</dbReference>
<dbReference type="GO" id="GO:0005840">
    <property type="term" value="C:ribosome"/>
    <property type="evidence" value="ECO:0007669"/>
    <property type="project" value="UniProtKB-KW"/>
</dbReference>
<dbReference type="GO" id="GO:0046872">
    <property type="term" value="F:metal ion binding"/>
    <property type="evidence" value="ECO:0007669"/>
    <property type="project" value="UniProtKB-KW"/>
</dbReference>
<dbReference type="GO" id="GO:0019843">
    <property type="term" value="F:rRNA binding"/>
    <property type="evidence" value="ECO:0007669"/>
    <property type="project" value="UniProtKB-KW"/>
</dbReference>
<dbReference type="GO" id="GO:0003735">
    <property type="term" value="F:structural constituent of ribosome"/>
    <property type="evidence" value="ECO:0007669"/>
    <property type="project" value="InterPro"/>
</dbReference>
<dbReference type="GO" id="GO:0006412">
    <property type="term" value="P:translation"/>
    <property type="evidence" value="ECO:0007669"/>
    <property type="project" value="UniProtKB-UniRule"/>
</dbReference>
<dbReference type="Gene3D" id="4.10.830.30">
    <property type="entry name" value="Ribosomal protein L31"/>
    <property type="match status" value="1"/>
</dbReference>
<dbReference type="HAMAP" id="MF_00501">
    <property type="entry name" value="Ribosomal_bL31_1"/>
    <property type="match status" value="1"/>
</dbReference>
<dbReference type="InterPro" id="IPR034704">
    <property type="entry name" value="Ribosomal_bL28/bL31-like_sf"/>
</dbReference>
<dbReference type="InterPro" id="IPR002150">
    <property type="entry name" value="Ribosomal_bL31"/>
</dbReference>
<dbReference type="InterPro" id="IPR027491">
    <property type="entry name" value="Ribosomal_bL31_A"/>
</dbReference>
<dbReference type="InterPro" id="IPR042105">
    <property type="entry name" value="Ribosomal_bL31_sf"/>
</dbReference>
<dbReference type="NCBIfam" id="TIGR00105">
    <property type="entry name" value="L31"/>
    <property type="match status" value="1"/>
</dbReference>
<dbReference type="NCBIfam" id="NF000612">
    <property type="entry name" value="PRK00019.1"/>
    <property type="match status" value="1"/>
</dbReference>
<dbReference type="NCBIfam" id="NF001809">
    <property type="entry name" value="PRK00528.1"/>
    <property type="match status" value="1"/>
</dbReference>
<dbReference type="PANTHER" id="PTHR33280">
    <property type="entry name" value="50S RIBOSOMAL PROTEIN L31, CHLOROPLASTIC"/>
    <property type="match status" value="1"/>
</dbReference>
<dbReference type="PANTHER" id="PTHR33280:SF1">
    <property type="entry name" value="LARGE RIBOSOMAL SUBUNIT PROTEIN BL31C"/>
    <property type="match status" value="1"/>
</dbReference>
<dbReference type="Pfam" id="PF01197">
    <property type="entry name" value="Ribosomal_L31"/>
    <property type="match status" value="1"/>
</dbReference>
<dbReference type="PRINTS" id="PR01249">
    <property type="entry name" value="RIBOSOMALL31"/>
</dbReference>
<dbReference type="SUPFAM" id="SSF143800">
    <property type="entry name" value="L28p-like"/>
    <property type="match status" value="1"/>
</dbReference>
<dbReference type="PROSITE" id="PS01143">
    <property type="entry name" value="RIBOSOMAL_L31"/>
    <property type="match status" value="1"/>
</dbReference>
<feature type="chain" id="PRO_1000126674" description="Large ribosomal subunit protein bL31">
    <location>
        <begin position="1"/>
        <end position="66"/>
    </location>
</feature>
<feature type="binding site" evidence="1">
    <location>
        <position position="16"/>
    </location>
    <ligand>
        <name>Zn(2+)</name>
        <dbReference type="ChEBI" id="CHEBI:29105"/>
    </ligand>
</feature>
<feature type="binding site" evidence="1">
    <location>
        <position position="18"/>
    </location>
    <ligand>
        <name>Zn(2+)</name>
        <dbReference type="ChEBI" id="CHEBI:29105"/>
    </ligand>
</feature>
<feature type="binding site" evidence="1">
    <location>
        <position position="36"/>
    </location>
    <ligand>
        <name>Zn(2+)</name>
        <dbReference type="ChEBI" id="CHEBI:29105"/>
    </ligand>
</feature>
<feature type="binding site" evidence="1">
    <location>
        <position position="39"/>
    </location>
    <ligand>
        <name>Zn(2+)</name>
        <dbReference type="ChEBI" id="CHEBI:29105"/>
    </ligand>
</feature>
<reference key="1">
    <citation type="journal article" date="2007" name="Proc. Natl. Acad. Sci. U.S.A.">
        <title>Deep-sea vent epsilon-proteobacterial genomes provide insights into emergence of pathogens.</title>
        <authorList>
            <person name="Nakagawa S."/>
            <person name="Takaki Y."/>
            <person name="Shimamura S."/>
            <person name="Reysenbach A.-L."/>
            <person name="Takai K."/>
            <person name="Horikoshi K."/>
        </authorList>
    </citation>
    <scope>NUCLEOTIDE SEQUENCE [LARGE SCALE GENOMIC DNA]</scope>
    <source>
        <strain>SB155-2</strain>
    </source>
</reference>
<proteinExistence type="inferred from homology"/>
<evidence type="ECO:0000255" key="1">
    <source>
        <dbReference type="HAMAP-Rule" id="MF_00501"/>
    </source>
</evidence>
<evidence type="ECO:0000305" key="2"/>
<protein>
    <recommendedName>
        <fullName evidence="1">Large ribosomal subunit protein bL31</fullName>
    </recommendedName>
    <alternativeName>
        <fullName evidence="2">50S ribosomal protein L31</fullName>
    </alternativeName>
</protein>
<accession>A6Q5A7</accession>
<name>RL31_NITSB</name>
<gene>
    <name evidence="1" type="primary">rpmE</name>
    <name type="ordered locus">NIS_1559</name>
</gene>
<comment type="function">
    <text evidence="1">Binds the 23S rRNA.</text>
</comment>
<comment type="cofactor">
    <cofactor evidence="1">
        <name>Zn(2+)</name>
        <dbReference type="ChEBI" id="CHEBI:29105"/>
    </cofactor>
    <text evidence="1">Binds 1 zinc ion per subunit.</text>
</comment>
<comment type="subunit">
    <text evidence="1">Part of the 50S ribosomal subunit.</text>
</comment>
<comment type="similarity">
    <text evidence="1">Belongs to the bacterial ribosomal protein bL31 family. Type A subfamily.</text>
</comment>
<keyword id="KW-0479">Metal-binding</keyword>
<keyword id="KW-1185">Reference proteome</keyword>
<keyword id="KW-0687">Ribonucleoprotein</keyword>
<keyword id="KW-0689">Ribosomal protein</keyword>
<keyword id="KW-0694">RNA-binding</keyword>
<keyword id="KW-0699">rRNA-binding</keyword>
<keyword id="KW-0862">Zinc</keyword>
<organism>
    <name type="scientific">Nitratiruptor sp. (strain SB155-2)</name>
    <dbReference type="NCBI Taxonomy" id="387092"/>
    <lineage>
        <taxon>Bacteria</taxon>
        <taxon>Pseudomonadati</taxon>
        <taxon>Campylobacterota</taxon>
        <taxon>Epsilonproteobacteria</taxon>
        <taxon>Nautiliales</taxon>
        <taxon>Nitratiruptoraceae</taxon>
        <taxon>Nitratiruptor</taxon>
    </lineage>
</organism>
<sequence length="66" mass="7664">MRKDIHPEYVECEVTCACGNHFVVMSNKPQLKIDICNKCHPFFTGSEKIVDTTGRVDKFKKKYNLK</sequence>